<comment type="function">
    <text evidence="1">Converts 2C-methyl-D-erythritol 2,4-cyclodiphosphate (ME-2,4cPP) into 1-hydroxy-2-methyl-2-(E)-butenyl 4-diphosphate.</text>
</comment>
<comment type="catalytic activity">
    <reaction evidence="1">
        <text>(2E)-4-hydroxy-3-methylbut-2-enyl diphosphate + oxidized [flavodoxin] + H2O + 2 H(+) = 2-C-methyl-D-erythritol 2,4-cyclic diphosphate + reduced [flavodoxin]</text>
        <dbReference type="Rhea" id="RHEA:43604"/>
        <dbReference type="Rhea" id="RHEA-COMP:10622"/>
        <dbReference type="Rhea" id="RHEA-COMP:10623"/>
        <dbReference type="ChEBI" id="CHEBI:15377"/>
        <dbReference type="ChEBI" id="CHEBI:15378"/>
        <dbReference type="ChEBI" id="CHEBI:57618"/>
        <dbReference type="ChEBI" id="CHEBI:58210"/>
        <dbReference type="ChEBI" id="CHEBI:58483"/>
        <dbReference type="ChEBI" id="CHEBI:128753"/>
        <dbReference type="EC" id="1.17.7.3"/>
    </reaction>
</comment>
<comment type="cofactor">
    <cofactor evidence="1">
        <name>[4Fe-4S] cluster</name>
        <dbReference type="ChEBI" id="CHEBI:49883"/>
    </cofactor>
    <text evidence="1">Binds 1 [4Fe-4S] cluster.</text>
</comment>
<comment type="pathway">
    <text evidence="1">Isoprenoid biosynthesis; isopentenyl diphosphate biosynthesis via DXP pathway; isopentenyl diphosphate from 1-deoxy-D-xylulose 5-phosphate: step 5/6.</text>
</comment>
<comment type="similarity">
    <text evidence="1">Belongs to the IspG family.</text>
</comment>
<accession>Q71ZM9</accession>
<organism>
    <name type="scientific">Listeria monocytogenes serotype 4b (strain F2365)</name>
    <dbReference type="NCBI Taxonomy" id="265669"/>
    <lineage>
        <taxon>Bacteria</taxon>
        <taxon>Bacillati</taxon>
        <taxon>Bacillota</taxon>
        <taxon>Bacilli</taxon>
        <taxon>Bacillales</taxon>
        <taxon>Listeriaceae</taxon>
        <taxon>Listeria</taxon>
    </lineage>
</organism>
<feature type="chain" id="PRO_0000190593" description="4-hydroxy-3-methylbut-2-en-1-yl diphosphate synthase (flavodoxin)">
    <location>
        <begin position="1"/>
        <end position="368"/>
    </location>
</feature>
<feature type="binding site" evidence="1">
    <location>
        <position position="268"/>
    </location>
    <ligand>
        <name>[4Fe-4S] cluster</name>
        <dbReference type="ChEBI" id="CHEBI:49883"/>
    </ligand>
</feature>
<feature type="binding site" evidence="1">
    <location>
        <position position="271"/>
    </location>
    <ligand>
        <name>[4Fe-4S] cluster</name>
        <dbReference type="ChEBI" id="CHEBI:49883"/>
    </ligand>
</feature>
<feature type="binding site" evidence="1">
    <location>
        <position position="303"/>
    </location>
    <ligand>
        <name>[4Fe-4S] cluster</name>
        <dbReference type="ChEBI" id="CHEBI:49883"/>
    </ligand>
</feature>
<feature type="binding site" evidence="1">
    <location>
        <position position="310"/>
    </location>
    <ligand>
        <name>[4Fe-4S] cluster</name>
        <dbReference type="ChEBI" id="CHEBI:49883"/>
    </ligand>
</feature>
<name>ISPG_LISMF</name>
<protein>
    <recommendedName>
        <fullName evidence="1">4-hydroxy-3-methylbut-2-en-1-yl diphosphate synthase (flavodoxin)</fullName>
        <ecNumber evidence="1">1.17.7.3</ecNumber>
    </recommendedName>
    <alternativeName>
        <fullName evidence="1">1-hydroxy-2-methyl-2-(E)-butenyl 4-diphosphate synthase</fullName>
    </alternativeName>
</protein>
<reference key="1">
    <citation type="journal article" date="2004" name="Nucleic Acids Res.">
        <title>Whole genome comparisons of serotype 4b and 1/2a strains of the food-borne pathogen Listeria monocytogenes reveal new insights into the core genome components of this species.</title>
        <authorList>
            <person name="Nelson K.E."/>
            <person name="Fouts D.E."/>
            <person name="Mongodin E.F."/>
            <person name="Ravel J."/>
            <person name="DeBoy R.T."/>
            <person name="Kolonay J.F."/>
            <person name="Rasko D.A."/>
            <person name="Angiuoli S.V."/>
            <person name="Gill S.R."/>
            <person name="Paulsen I.T."/>
            <person name="Peterson J.D."/>
            <person name="White O."/>
            <person name="Nelson W.C."/>
            <person name="Nierman W.C."/>
            <person name="Beanan M.J."/>
            <person name="Brinkac L.M."/>
            <person name="Daugherty S.C."/>
            <person name="Dodson R.J."/>
            <person name="Durkin A.S."/>
            <person name="Madupu R."/>
            <person name="Haft D.H."/>
            <person name="Selengut J."/>
            <person name="Van Aken S.E."/>
            <person name="Khouri H.M."/>
            <person name="Fedorova N."/>
            <person name="Forberger H.A."/>
            <person name="Tran B."/>
            <person name="Kathariou S."/>
            <person name="Wonderling L.D."/>
            <person name="Uhlich G.A."/>
            <person name="Bayles D.O."/>
            <person name="Luchansky J.B."/>
            <person name="Fraser C.M."/>
        </authorList>
    </citation>
    <scope>NUCLEOTIDE SEQUENCE [LARGE SCALE GENOMIC DNA]</scope>
    <source>
        <strain>F2365</strain>
    </source>
</reference>
<gene>
    <name evidence="1" type="primary">ispG</name>
    <name type="ordered locus">LMOf2365_1460</name>
</gene>
<proteinExistence type="inferred from homology"/>
<evidence type="ECO:0000255" key="1">
    <source>
        <dbReference type="HAMAP-Rule" id="MF_00159"/>
    </source>
</evidence>
<dbReference type="EC" id="1.17.7.3" evidence="1"/>
<dbReference type="EMBL" id="AE017262">
    <property type="protein sequence ID" value="AAT04235.1"/>
    <property type="molecule type" value="Genomic_DNA"/>
</dbReference>
<dbReference type="RefSeq" id="WP_003734589.1">
    <property type="nucleotide sequence ID" value="NC_002973.6"/>
</dbReference>
<dbReference type="SMR" id="Q71ZM9"/>
<dbReference type="KEGG" id="lmf:LMOf2365_1460"/>
<dbReference type="HOGENOM" id="CLU_042258_0_0_9"/>
<dbReference type="UniPathway" id="UPA00056">
    <property type="reaction ID" value="UER00096"/>
</dbReference>
<dbReference type="GO" id="GO:0051539">
    <property type="term" value="F:4 iron, 4 sulfur cluster binding"/>
    <property type="evidence" value="ECO:0007669"/>
    <property type="project" value="UniProtKB-UniRule"/>
</dbReference>
<dbReference type="GO" id="GO:0046429">
    <property type="term" value="F:4-hydroxy-3-methylbut-2-en-1-yl diphosphate synthase activity (ferredoxin)"/>
    <property type="evidence" value="ECO:0007669"/>
    <property type="project" value="UniProtKB-UniRule"/>
</dbReference>
<dbReference type="GO" id="GO:0141197">
    <property type="term" value="F:4-hydroxy-3-methylbut-2-enyl-diphosphate synthase activity (flavodoxin)"/>
    <property type="evidence" value="ECO:0007669"/>
    <property type="project" value="UniProtKB-EC"/>
</dbReference>
<dbReference type="GO" id="GO:0005506">
    <property type="term" value="F:iron ion binding"/>
    <property type="evidence" value="ECO:0007669"/>
    <property type="project" value="InterPro"/>
</dbReference>
<dbReference type="GO" id="GO:0019288">
    <property type="term" value="P:isopentenyl diphosphate biosynthetic process, methylerythritol 4-phosphate pathway"/>
    <property type="evidence" value="ECO:0007669"/>
    <property type="project" value="UniProtKB-UniRule"/>
</dbReference>
<dbReference type="GO" id="GO:0016114">
    <property type="term" value="P:terpenoid biosynthetic process"/>
    <property type="evidence" value="ECO:0007669"/>
    <property type="project" value="InterPro"/>
</dbReference>
<dbReference type="FunFam" id="3.20.20.20:FF:000001">
    <property type="entry name" value="4-hydroxy-3-methylbut-2-en-1-yl diphosphate synthase (flavodoxin)"/>
    <property type="match status" value="1"/>
</dbReference>
<dbReference type="FunFam" id="3.30.413.10:FF:000005">
    <property type="entry name" value="4-hydroxy-3-methylbut-2-en-1-yl diphosphate synthase (flavodoxin)"/>
    <property type="match status" value="1"/>
</dbReference>
<dbReference type="Gene3D" id="3.20.20.20">
    <property type="entry name" value="Dihydropteroate synthase-like"/>
    <property type="match status" value="1"/>
</dbReference>
<dbReference type="Gene3D" id="3.30.413.10">
    <property type="entry name" value="Sulfite Reductase Hemoprotein, domain 1"/>
    <property type="match status" value="1"/>
</dbReference>
<dbReference type="HAMAP" id="MF_00159">
    <property type="entry name" value="IspG"/>
    <property type="match status" value="1"/>
</dbReference>
<dbReference type="InterPro" id="IPR011005">
    <property type="entry name" value="Dihydropteroate_synth-like_sf"/>
</dbReference>
<dbReference type="InterPro" id="IPR016425">
    <property type="entry name" value="IspG_bac"/>
</dbReference>
<dbReference type="InterPro" id="IPR004588">
    <property type="entry name" value="IspG_bac-typ"/>
</dbReference>
<dbReference type="InterPro" id="IPR045854">
    <property type="entry name" value="NO2/SO3_Rdtase_4Fe4S_sf"/>
</dbReference>
<dbReference type="NCBIfam" id="TIGR00612">
    <property type="entry name" value="ispG_gcpE"/>
    <property type="match status" value="1"/>
</dbReference>
<dbReference type="NCBIfam" id="NF001540">
    <property type="entry name" value="PRK00366.1"/>
    <property type="match status" value="1"/>
</dbReference>
<dbReference type="PANTHER" id="PTHR30454">
    <property type="entry name" value="4-HYDROXY-3-METHYLBUT-2-EN-1-YL DIPHOSPHATE SYNTHASE"/>
    <property type="match status" value="1"/>
</dbReference>
<dbReference type="PANTHER" id="PTHR30454:SF0">
    <property type="entry name" value="4-HYDROXY-3-METHYLBUT-2-EN-1-YL DIPHOSPHATE SYNTHASE (FERREDOXIN), CHLOROPLASTIC"/>
    <property type="match status" value="1"/>
</dbReference>
<dbReference type="Pfam" id="PF04551">
    <property type="entry name" value="GcpE"/>
    <property type="match status" value="1"/>
</dbReference>
<dbReference type="PIRSF" id="PIRSF004640">
    <property type="entry name" value="IspG"/>
    <property type="match status" value="1"/>
</dbReference>
<dbReference type="SUPFAM" id="SSF51717">
    <property type="entry name" value="Dihydropteroate synthetase-like"/>
    <property type="match status" value="1"/>
</dbReference>
<dbReference type="SUPFAM" id="SSF56014">
    <property type="entry name" value="Nitrite and sulphite reductase 4Fe-4S domain-like"/>
    <property type="match status" value="1"/>
</dbReference>
<keyword id="KW-0004">4Fe-4S</keyword>
<keyword id="KW-0408">Iron</keyword>
<keyword id="KW-0411">Iron-sulfur</keyword>
<keyword id="KW-0414">Isoprene biosynthesis</keyword>
<keyword id="KW-0479">Metal-binding</keyword>
<keyword id="KW-0560">Oxidoreductase</keyword>
<sequence>MNERIFRENTRPVQVGNLTIGGSEELTIQSMTTTKTHDVEATVAEIHRLEEVGCQIVRVACPDERAANALSAIKKRIHIPLVADIHFDYRLALKAIDAGVDKIRINPGNIGRRDRVEKVVNAAKAKNIPIRIGVNAGSLEKKIIQKYGYPTAEGMVESALAHIKILEDLDFYDIIVSLKASDVNLAIEAYDKASRAFNYPLHLGITESGTQFAGGIKSAAGLGAILSLGIGNTLRVSLSADPVEEIKVAREVLKSFGLSSNAAMLISCPTCGRIEIDLIRIANEVENYIATIKAPIKVAVLGCAVNGPGEAREADIGIAGSNGEGLLFRHGKIIRKVPEAIMVEELKKEIDILAEEYFEKKTDLESLR</sequence>